<evidence type="ECO:0000255" key="1">
    <source>
        <dbReference type="HAMAP-Rule" id="MF_00522"/>
    </source>
</evidence>
<comment type="function">
    <text evidence="1">May help in the organization of the PsaE and PsaF subunits.</text>
</comment>
<comment type="subcellular location">
    <subcellularLocation>
        <location evidence="1">Plastid</location>
        <location evidence="1">Chloroplast thylakoid membrane</location>
        <topology evidence="1">Single-pass membrane protein</topology>
    </subcellularLocation>
</comment>
<comment type="similarity">
    <text evidence="1">Belongs to the PsaJ family.</text>
</comment>
<organism>
    <name type="scientific">Cicer arietinum</name>
    <name type="common">Chickpea</name>
    <name type="synonym">Garbanzo</name>
    <dbReference type="NCBI Taxonomy" id="3827"/>
    <lineage>
        <taxon>Eukaryota</taxon>
        <taxon>Viridiplantae</taxon>
        <taxon>Streptophyta</taxon>
        <taxon>Embryophyta</taxon>
        <taxon>Tracheophyta</taxon>
        <taxon>Spermatophyta</taxon>
        <taxon>Magnoliopsida</taxon>
        <taxon>eudicotyledons</taxon>
        <taxon>Gunneridae</taxon>
        <taxon>Pentapetalae</taxon>
        <taxon>rosids</taxon>
        <taxon>fabids</taxon>
        <taxon>Fabales</taxon>
        <taxon>Fabaceae</taxon>
        <taxon>Papilionoideae</taxon>
        <taxon>50 kb inversion clade</taxon>
        <taxon>NPAAA clade</taxon>
        <taxon>Hologalegina</taxon>
        <taxon>IRL clade</taxon>
        <taxon>Cicereae</taxon>
        <taxon>Cicer</taxon>
    </lineage>
</organism>
<accession>B5LMP4</accession>
<sequence length="44" mass="4993">MRDLKTYLSVAPVASTLWFVALAGLLIEINRLFPDALTFPFFSF</sequence>
<reference key="1">
    <citation type="journal article" date="2008" name="Mol. Phylogenet. Evol.">
        <title>Complete plastid genome sequence of the chickpea (Cicer arietinum) and the phylogenetic distribution of rps12 and clpP intron losses among legumes (Leguminosae).</title>
        <authorList>
            <person name="Jansen R.K."/>
            <person name="Wojciechowski M.F."/>
            <person name="Sanniyasi E."/>
            <person name="Lee S.-B."/>
            <person name="Daniell H."/>
        </authorList>
    </citation>
    <scope>NUCLEOTIDE SEQUENCE [LARGE SCALE GENOMIC DNA]</scope>
</reference>
<name>PSAJ_CICAR</name>
<feature type="chain" id="PRO_0000354137" description="Photosystem I reaction center subunit IX">
    <location>
        <begin position="1"/>
        <end position="44"/>
    </location>
</feature>
<feature type="transmembrane region" description="Helical" evidence="1">
    <location>
        <begin position="7"/>
        <end position="27"/>
    </location>
</feature>
<protein>
    <recommendedName>
        <fullName evidence="1">Photosystem I reaction center subunit IX</fullName>
    </recommendedName>
    <alternativeName>
        <fullName evidence="1">PSI-J</fullName>
    </alternativeName>
</protein>
<proteinExistence type="inferred from homology"/>
<keyword id="KW-0150">Chloroplast</keyword>
<keyword id="KW-0472">Membrane</keyword>
<keyword id="KW-0602">Photosynthesis</keyword>
<keyword id="KW-0603">Photosystem I</keyword>
<keyword id="KW-0934">Plastid</keyword>
<keyword id="KW-1185">Reference proteome</keyword>
<keyword id="KW-0793">Thylakoid</keyword>
<keyword id="KW-0812">Transmembrane</keyword>
<keyword id="KW-1133">Transmembrane helix</keyword>
<dbReference type="EMBL" id="EU835853">
    <property type="protein sequence ID" value="ACH41090.1"/>
    <property type="molecule type" value="Genomic_DNA"/>
</dbReference>
<dbReference type="RefSeq" id="YP_002149753.1">
    <property type="nucleotide sequence ID" value="NC_011163.1"/>
</dbReference>
<dbReference type="SMR" id="B5LMP4"/>
<dbReference type="GeneID" id="6797488"/>
<dbReference type="KEGG" id="cam:6797488"/>
<dbReference type="OrthoDB" id="1844838at2759"/>
<dbReference type="Proteomes" id="UP000087171">
    <property type="component" value="Chloroplast Pltd"/>
</dbReference>
<dbReference type="GO" id="GO:0009535">
    <property type="term" value="C:chloroplast thylakoid membrane"/>
    <property type="evidence" value="ECO:0007669"/>
    <property type="project" value="UniProtKB-SubCell"/>
</dbReference>
<dbReference type="GO" id="GO:0009522">
    <property type="term" value="C:photosystem I"/>
    <property type="evidence" value="ECO:0007669"/>
    <property type="project" value="UniProtKB-KW"/>
</dbReference>
<dbReference type="GO" id="GO:0015979">
    <property type="term" value="P:photosynthesis"/>
    <property type="evidence" value="ECO:0007669"/>
    <property type="project" value="UniProtKB-UniRule"/>
</dbReference>
<dbReference type="FunFam" id="1.20.5.510:FF:000001">
    <property type="entry name" value="Photosystem I reaction center subunit IX"/>
    <property type="match status" value="1"/>
</dbReference>
<dbReference type="Gene3D" id="1.20.5.510">
    <property type="entry name" value="Single helix bin"/>
    <property type="match status" value="1"/>
</dbReference>
<dbReference type="HAMAP" id="MF_00522">
    <property type="entry name" value="PSI_PsaJ"/>
    <property type="match status" value="1"/>
</dbReference>
<dbReference type="InterPro" id="IPR002615">
    <property type="entry name" value="PSI_PsaJ"/>
</dbReference>
<dbReference type="InterPro" id="IPR036062">
    <property type="entry name" value="PSI_PsaJ_sf"/>
</dbReference>
<dbReference type="PANTHER" id="PTHR36082">
    <property type="match status" value="1"/>
</dbReference>
<dbReference type="PANTHER" id="PTHR36082:SF2">
    <property type="entry name" value="PHOTOSYSTEM I REACTION CENTER SUBUNIT IX"/>
    <property type="match status" value="1"/>
</dbReference>
<dbReference type="Pfam" id="PF01701">
    <property type="entry name" value="PSI_PsaJ"/>
    <property type="match status" value="1"/>
</dbReference>
<dbReference type="SUPFAM" id="SSF81544">
    <property type="entry name" value="Subunit IX of photosystem I reaction centre, PsaJ"/>
    <property type="match status" value="1"/>
</dbReference>
<geneLocation type="chloroplast"/>
<gene>
    <name evidence="1" type="primary">psaJ</name>
</gene>